<sequence>MKRKTLTQYLVEQQRSAQALGPEVRLLIEVVARACKAISHAVSKGALGGVLGSLESENVQGEVQKKLDVLSNEILLEANEWGGHLAAMASEEMETIHLIPNRYPKGEYLLLFDPLDGSSNIDVNVSIGTIFSVLRAPHRVAGADVCEQDFLQPGSQQVAAGYAVYGPQTMLVLTIGNGVVGFTLDREMGSWVLTHESMRIPEDTKEFAINMSNMRHWAPPVKRYIDECLAGKTGPLGKDYNMRWIASMVADVHRILTRGGIFMYPWDAREPGKAGKLRLMYEANPMGLIVEQAGGAAIDGTGRILDIQPDKLHQRVSVILGSKNEVERVGRYHAEAHAS</sequence>
<keyword id="KW-0119">Carbohydrate metabolism</keyword>
<keyword id="KW-0963">Cytoplasm</keyword>
<keyword id="KW-0378">Hydrolase</keyword>
<keyword id="KW-0460">Magnesium</keyword>
<keyword id="KW-0479">Metal-binding</keyword>
<keyword id="KW-1185">Reference proteome</keyword>
<reference key="1">
    <citation type="journal article" date="2003" name="Nat. Genet.">
        <title>Comparative analysis of the genome sequences of Bordetella pertussis, Bordetella parapertussis and Bordetella bronchiseptica.</title>
        <authorList>
            <person name="Parkhill J."/>
            <person name="Sebaihia M."/>
            <person name="Preston A."/>
            <person name="Murphy L.D."/>
            <person name="Thomson N.R."/>
            <person name="Harris D.E."/>
            <person name="Holden M.T.G."/>
            <person name="Churcher C.M."/>
            <person name="Bentley S.D."/>
            <person name="Mungall K.L."/>
            <person name="Cerdeno-Tarraga A.-M."/>
            <person name="Temple L."/>
            <person name="James K.D."/>
            <person name="Harris B."/>
            <person name="Quail M.A."/>
            <person name="Achtman M."/>
            <person name="Atkin R."/>
            <person name="Baker S."/>
            <person name="Basham D."/>
            <person name="Bason N."/>
            <person name="Cherevach I."/>
            <person name="Chillingworth T."/>
            <person name="Collins M."/>
            <person name="Cronin A."/>
            <person name="Davis P."/>
            <person name="Doggett J."/>
            <person name="Feltwell T."/>
            <person name="Goble A."/>
            <person name="Hamlin N."/>
            <person name="Hauser H."/>
            <person name="Holroyd S."/>
            <person name="Jagels K."/>
            <person name="Leather S."/>
            <person name="Moule S."/>
            <person name="Norberczak H."/>
            <person name="O'Neil S."/>
            <person name="Ormond D."/>
            <person name="Price C."/>
            <person name="Rabbinowitsch E."/>
            <person name="Rutter S."/>
            <person name="Sanders M."/>
            <person name="Saunders D."/>
            <person name="Seeger K."/>
            <person name="Sharp S."/>
            <person name="Simmonds M."/>
            <person name="Skelton J."/>
            <person name="Squares R."/>
            <person name="Squares S."/>
            <person name="Stevens K."/>
            <person name="Unwin L."/>
            <person name="Whitehead S."/>
            <person name="Barrell B.G."/>
            <person name="Maskell D.J."/>
        </authorList>
    </citation>
    <scope>NUCLEOTIDE SEQUENCE [LARGE SCALE GENOMIC DNA]</scope>
    <source>
        <strain>Tohama I / ATCC BAA-589 / NCTC 13251</strain>
    </source>
</reference>
<dbReference type="EC" id="3.1.3.11" evidence="1"/>
<dbReference type="EMBL" id="BX640413">
    <property type="protein sequence ID" value="CAE41171.1"/>
    <property type="molecule type" value="Genomic_DNA"/>
</dbReference>
<dbReference type="RefSeq" id="NP_879678.1">
    <property type="nucleotide sequence ID" value="NC_002929.2"/>
</dbReference>
<dbReference type="RefSeq" id="WP_003813068.1">
    <property type="nucleotide sequence ID" value="NZ_CP039022.1"/>
</dbReference>
<dbReference type="SMR" id="Q7VZM9"/>
<dbReference type="STRING" id="257313.BP0868"/>
<dbReference type="PaxDb" id="257313-BP0868"/>
<dbReference type="KEGG" id="bpe:BP0868"/>
<dbReference type="PATRIC" id="fig|257313.5.peg.923"/>
<dbReference type="eggNOG" id="COG0158">
    <property type="taxonomic scope" value="Bacteria"/>
</dbReference>
<dbReference type="HOGENOM" id="CLU_039977_0_0_4"/>
<dbReference type="UniPathway" id="UPA00138"/>
<dbReference type="Proteomes" id="UP000002676">
    <property type="component" value="Chromosome"/>
</dbReference>
<dbReference type="GO" id="GO:0005829">
    <property type="term" value="C:cytosol"/>
    <property type="evidence" value="ECO:0007669"/>
    <property type="project" value="TreeGrafter"/>
</dbReference>
<dbReference type="GO" id="GO:0042132">
    <property type="term" value="F:fructose 1,6-bisphosphate 1-phosphatase activity"/>
    <property type="evidence" value="ECO:0007669"/>
    <property type="project" value="UniProtKB-UniRule"/>
</dbReference>
<dbReference type="GO" id="GO:0000287">
    <property type="term" value="F:magnesium ion binding"/>
    <property type="evidence" value="ECO:0007669"/>
    <property type="project" value="UniProtKB-UniRule"/>
</dbReference>
<dbReference type="GO" id="GO:0030388">
    <property type="term" value="P:fructose 1,6-bisphosphate metabolic process"/>
    <property type="evidence" value="ECO:0007669"/>
    <property type="project" value="TreeGrafter"/>
</dbReference>
<dbReference type="GO" id="GO:0006002">
    <property type="term" value="P:fructose 6-phosphate metabolic process"/>
    <property type="evidence" value="ECO:0007669"/>
    <property type="project" value="TreeGrafter"/>
</dbReference>
<dbReference type="GO" id="GO:0006000">
    <property type="term" value="P:fructose metabolic process"/>
    <property type="evidence" value="ECO:0007669"/>
    <property type="project" value="TreeGrafter"/>
</dbReference>
<dbReference type="GO" id="GO:0006094">
    <property type="term" value="P:gluconeogenesis"/>
    <property type="evidence" value="ECO:0007669"/>
    <property type="project" value="UniProtKB-UniRule"/>
</dbReference>
<dbReference type="GO" id="GO:0005986">
    <property type="term" value="P:sucrose biosynthetic process"/>
    <property type="evidence" value="ECO:0007669"/>
    <property type="project" value="TreeGrafter"/>
</dbReference>
<dbReference type="CDD" id="cd00354">
    <property type="entry name" value="FBPase"/>
    <property type="match status" value="1"/>
</dbReference>
<dbReference type="FunFam" id="3.30.540.10:FF:000006">
    <property type="entry name" value="Fructose-1,6-bisphosphatase class 1"/>
    <property type="match status" value="1"/>
</dbReference>
<dbReference type="FunFam" id="3.40.190.80:FF:000011">
    <property type="entry name" value="Fructose-1,6-bisphosphatase class 1"/>
    <property type="match status" value="1"/>
</dbReference>
<dbReference type="Gene3D" id="3.40.190.80">
    <property type="match status" value="1"/>
</dbReference>
<dbReference type="Gene3D" id="3.30.540.10">
    <property type="entry name" value="Fructose-1,6-Bisphosphatase, subunit A, domain 1"/>
    <property type="match status" value="1"/>
</dbReference>
<dbReference type="HAMAP" id="MF_01855">
    <property type="entry name" value="FBPase_class1"/>
    <property type="match status" value="1"/>
</dbReference>
<dbReference type="InterPro" id="IPR044015">
    <property type="entry name" value="FBPase_C_dom"/>
</dbReference>
<dbReference type="InterPro" id="IPR000146">
    <property type="entry name" value="FBPase_class-1"/>
</dbReference>
<dbReference type="InterPro" id="IPR033391">
    <property type="entry name" value="FBPase_N"/>
</dbReference>
<dbReference type="InterPro" id="IPR028343">
    <property type="entry name" value="FBPtase"/>
</dbReference>
<dbReference type="NCBIfam" id="NF006778">
    <property type="entry name" value="PRK09293.1-1"/>
    <property type="match status" value="1"/>
</dbReference>
<dbReference type="NCBIfam" id="NF006779">
    <property type="entry name" value="PRK09293.1-3"/>
    <property type="match status" value="1"/>
</dbReference>
<dbReference type="NCBIfam" id="NF006780">
    <property type="entry name" value="PRK09293.1-4"/>
    <property type="match status" value="1"/>
</dbReference>
<dbReference type="PANTHER" id="PTHR11556">
    <property type="entry name" value="FRUCTOSE-1,6-BISPHOSPHATASE-RELATED"/>
    <property type="match status" value="1"/>
</dbReference>
<dbReference type="PANTHER" id="PTHR11556:SF35">
    <property type="entry name" value="SEDOHEPTULOSE-1,7-BISPHOSPHATASE, CHLOROPLASTIC"/>
    <property type="match status" value="1"/>
</dbReference>
<dbReference type="Pfam" id="PF00316">
    <property type="entry name" value="FBPase"/>
    <property type="match status" value="1"/>
</dbReference>
<dbReference type="Pfam" id="PF18913">
    <property type="entry name" value="FBPase_C"/>
    <property type="match status" value="1"/>
</dbReference>
<dbReference type="PIRSF" id="PIRSF500210">
    <property type="entry name" value="FBPtase"/>
    <property type="match status" value="1"/>
</dbReference>
<dbReference type="PIRSF" id="PIRSF000904">
    <property type="entry name" value="FBPtase_SBPase"/>
    <property type="match status" value="1"/>
</dbReference>
<dbReference type="PRINTS" id="PR00115">
    <property type="entry name" value="F16BPHPHTASE"/>
</dbReference>
<dbReference type="SUPFAM" id="SSF56655">
    <property type="entry name" value="Carbohydrate phosphatase"/>
    <property type="match status" value="1"/>
</dbReference>
<protein>
    <recommendedName>
        <fullName evidence="1">Fructose-1,6-bisphosphatase class 1</fullName>
        <shortName evidence="1">FBPase class 1</shortName>
        <ecNumber evidence="1">3.1.3.11</ecNumber>
    </recommendedName>
    <alternativeName>
        <fullName evidence="1">D-fructose-1,6-bisphosphate 1-phosphohydrolase class 1</fullName>
    </alternativeName>
</protein>
<accession>Q7VZM9</accession>
<proteinExistence type="inferred from homology"/>
<organism>
    <name type="scientific">Bordetella pertussis (strain Tohama I / ATCC BAA-589 / NCTC 13251)</name>
    <dbReference type="NCBI Taxonomy" id="257313"/>
    <lineage>
        <taxon>Bacteria</taxon>
        <taxon>Pseudomonadati</taxon>
        <taxon>Pseudomonadota</taxon>
        <taxon>Betaproteobacteria</taxon>
        <taxon>Burkholderiales</taxon>
        <taxon>Alcaligenaceae</taxon>
        <taxon>Bordetella</taxon>
    </lineage>
</organism>
<gene>
    <name evidence="1" type="primary">fbp</name>
    <name type="ordered locus">BP0868</name>
</gene>
<comment type="catalytic activity">
    <reaction evidence="1">
        <text>beta-D-fructose 1,6-bisphosphate + H2O = beta-D-fructose 6-phosphate + phosphate</text>
        <dbReference type="Rhea" id="RHEA:11064"/>
        <dbReference type="ChEBI" id="CHEBI:15377"/>
        <dbReference type="ChEBI" id="CHEBI:32966"/>
        <dbReference type="ChEBI" id="CHEBI:43474"/>
        <dbReference type="ChEBI" id="CHEBI:57634"/>
        <dbReference type="EC" id="3.1.3.11"/>
    </reaction>
</comment>
<comment type="cofactor">
    <cofactor evidence="1">
        <name>Mg(2+)</name>
        <dbReference type="ChEBI" id="CHEBI:18420"/>
    </cofactor>
    <text evidence="1">Binds 2 magnesium ions per subunit.</text>
</comment>
<comment type="pathway">
    <text evidence="1">Carbohydrate biosynthesis; gluconeogenesis.</text>
</comment>
<comment type="subunit">
    <text evidence="1">Homotetramer.</text>
</comment>
<comment type="subcellular location">
    <subcellularLocation>
        <location evidence="1">Cytoplasm</location>
    </subcellularLocation>
</comment>
<comment type="similarity">
    <text evidence="1">Belongs to the FBPase class 1 family.</text>
</comment>
<evidence type="ECO:0000255" key="1">
    <source>
        <dbReference type="HAMAP-Rule" id="MF_01855"/>
    </source>
</evidence>
<name>F16PA_BORPE</name>
<feature type="chain" id="PRO_0000364470" description="Fructose-1,6-bisphosphatase class 1">
    <location>
        <begin position="1"/>
        <end position="339"/>
    </location>
</feature>
<feature type="binding site" evidence="1">
    <location>
        <position position="91"/>
    </location>
    <ligand>
        <name>Mg(2+)</name>
        <dbReference type="ChEBI" id="CHEBI:18420"/>
        <label>1</label>
    </ligand>
</feature>
<feature type="binding site" evidence="1">
    <location>
        <position position="113"/>
    </location>
    <ligand>
        <name>Mg(2+)</name>
        <dbReference type="ChEBI" id="CHEBI:18420"/>
        <label>1</label>
    </ligand>
</feature>
<feature type="binding site" evidence="1">
    <location>
        <position position="113"/>
    </location>
    <ligand>
        <name>Mg(2+)</name>
        <dbReference type="ChEBI" id="CHEBI:18420"/>
        <label>2</label>
    </ligand>
</feature>
<feature type="binding site" evidence="1">
    <location>
        <position position="115"/>
    </location>
    <ligand>
        <name>Mg(2+)</name>
        <dbReference type="ChEBI" id="CHEBI:18420"/>
        <label>1</label>
    </ligand>
</feature>
<feature type="binding site" evidence="1">
    <location>
        <begin position="116"/>
        <end position="119"/>
    </location>
    <ligand>
        <name>substrate</name>
    </ligand>
</feature>
<feature type="binding site" evidence="1">
    <location>
        <position position="116"/>
    </location>
    <ligand>
        <name>Mg(2+)</name>
        <dbReference type="ChEBI" id="CHEBI:18420"/>
        <label>2</label>
    </ligand>
</feature>
<feature type="binding site" evidence="1">
    <location>
        <position position="210"/>
    </location>
    <ligand>
        <name>substrate</name>
    </ligand>
</feature>
<feature type="binding site" evidence="1">
    <location>
        <position position="276"/>
    </location>
    <ligand>
        <name>substrate</name>
    </ligand>
</feature>
<feature type="binding site" evidence="1">
    <location>
        <position position="282"/>
    </location>
    <ligand>
        <name>Mg(2+)</name>
        <dbReference type="ChEBI" id="CHEBI:18420"/>
        <label>2</label>
    </ligand>
</feature>